<feature type="chain" id="PRO_0000234859" description="Large ribosomal subunit protein uL10">
    <location>
        <begin position="1"/>
        <end position="183"/>
    </location>
</feature>
<keyword id="KW-0687">Ribonucleoprotein</keyword>
<keyword id="KW-0689">Ribosomal protein</keyword>
<keyword id="KW-0694">RNA-binding</keyword>
<keyword id="KW-0699">rRNA-binding</keyword>
<evidence type="ECO:0000255" key="1">
    <source>
        <dbReference type="HAMAP-Rule" id="MF_00362"/>
    </source>
</evidence>
<evidence type="ECO:0000305" key="2"/>
<name>RL10_MESH7</name>
<sequence>MNVSFSIAPYFFKERRAKLNSFRKRKVEIVAEIDSLLKNSSSLAIVEYRGLTVNKLEQLRKEFKSAGVLSKVYKNRLFKIAAENNGYLDLQTDLVGPNLFAFGTTDAIAPAKIIAKNAKEQPLLILKGGIYDNQVVSAAENALISALPSYTEALTMLASGLQSPLKQLAFGLKLLIDEQKITA</sequence>
<organism>
    <name type="scientific">Mesomycoplasma hyopneumoniae (strain 7448)</name>
    <name type="common">Mycoplasma hyopneumoniae</name>
    <dbReference type="NCBI Taxonomy" id="262722"/>
    <lineage>
        <taxon>Bacteria</taxon>
        <taxon>Bacillati</taxon>
        <taxon>Mycoplasmatota</taxon>
        <taxon>Mycoplasmoidales</taxon>
        <taxon>Metamycoplasmataceae</taxon>
        <taxon>Mesomycoplasma</taxon>
    </lineage>
</organism>
<accession>Q4A7A7</accession>
<gene>
    <name evidence="1" type="primary">rplJ</name>
    <name type="ordered locus">MHP7448_0619</name>
</gene>
<proteinExistence type="inferred from homology"/>
<protein>
    <recommendedName>
        <fullName evidence="1">Large ribosomal subunit protein uL10</fullName>
    </recommendedName>
    <alternativeName>
        <fullName evidence="2">50S ribosomal protein L10</fullName>
    </alternativeName>
</protein>
<dbReference type="EMBL" id="AE017244">
    <property type="protein sequence ID" value="AAZ53982.1"/>
    <property type="molecule type" value="Genomic_DNA"/>
</dbReference>
<dbReference type="SMR" id="Q4A7A7"/>
<dbReference type="KEGG" id="mhp:MHP7448_0619"/>
<dbReference type="HOGENOM" id="CLU_092227_2_0_14"/>
<dbReference type="Proteomes" id="UP000000553">
    <property type="component" value="Chromosome"/>
</dbReference>
<dbReference type="GO" id="GO:1990904">
    <property type="term" value="C:ribonucleoprotein complex"/>
    <property type="evidence" value="ECO:0007669"/>
    <property type="project" value="UniProtKB-KW"/>
</dbReference>
<dbReference type="GO" id="GO:0005840">
    <property type="term" value="C:ribosome"/>
    <property type="evidence" value="ECO:0007669"/>
    <property type="project" value="UniProtKB-KW"/>
</dbReference>
<dbReference type="GO" id="GO:0070180">
    <property type="term" value="F:large ribosomal subunit rRNA binding"/>
    <property type="evidence" value="ECO:0007669"/>
    <property type="project" value="UniProtKB-UniRule"/>
</dbReference>
<dbReference type="GO" id="GO:0006412">
    <property type="term" value="P:translation"/>
    <property type="evidence" value="ECO:0007669"/>
    <property type="project" value="UniProtKB-UniRule"/>
</dbReference>
<dbReference type="CDD" id="cd05797">
    <property type="entry name" value="Ribosomal_L10"/>
    <property type="match status" value="1"/>
</dbReference>
<dbReference type="Gene3D" id="3.30.70.1730">
    <property type="match status" value="1"/>
</dbReference>
<dbReference type="HAMAP" id="MF_00362">
    <property type="entry name" value="Ribosomal_uL10"/>
    <property type="match status" value="1"/>
</dbReference>
<dbReference type="InterPro" id="IPR001790">
    <property type="entry name" value="Ribosomal_uL10"/>
</dbReference>
<dbReference type="InterPro" id="IPR043141">
    <property type="entry name" value="Ribosomal_uL10-like_sf"/>
</dbReference>
<dbReference type="InterPro" id="IPR022973">
    <property type="entry name" value="Ribosomal_uL10_bac"/>
</dbReference>
<dbReference type="InterPro" id="IPR047865">
    <property type="entry name" value="Ribosomal_uL10_bac_type"/>
</dbReference>
<dbReference type="NCBIfam" id="NF000955">
    <property type="entry name" value="PRK00099.1-1"/>
    <property type="match status" value="1"/>
</dbReference>
<dbReference type="PANTHER" id="PTHR11560">
    <property type="entry name" value="39S RIBOSOMAL PROTEIN L10, MITOCHONDRIAL"/>
    <property type="match status" value="1"/>
</dbReference>
<dbReference type="Pfam" id="PF00466">
    <property type="entry name" value="Ribosomal_L10"/>
    <property type="match status" value="1"/>
</dbReference>
<dbReference type="SUPFAM" id="SSF160369">
    <property type="entry name" value="Ribosomal protein L10-like"/>
    <property type="match status" value="1"/>
</dbReference>
<comment type="function">
    <text evidence="1">Forms part of the ribosomal stalk, playing a central role in the interaction of the ribosome with GTP-bound translation factors.</text>
</comment>
<comment type="subunit">
    <text evidence="1">Part of the ribosomal stalk of the 50S ribosomal subunit. The N-terminus interacts with L11 and the large rRNA to form the base of the stalk. The C-terminus forms an elongated spine to which L12 dimers bind in a sequential fashion forming a multimeric L10(L12)X complex.</text>
</comment>
<comment type="similarity">
    <text evidence="1">Belongs to the universal ribosomal protein uL10 family.</text>
</comment>
<reference key="1">
    <citation type="journal article" date="2005" name="J. Bacteriol.">
        <title>Swine and poultry pathogens: the complete genome sequences of two strains of Mycoplasma hyopneumoniae and a strain of Mycoplasma synoviae.</title>
        <authorList>
            <person name="Vasconcelos A.T.R."/>
            <person name="Ferreira H.B."/>
            <person name="Bizarro C.V."/>
            <person name="Bonatto S.L."/>
            <person name="Carvalho M.O."/>
            <person name="Pinto P.M."/>
            <person name="Almeida D.F."/>
            <person name="Almeida L.G.P."/>
            <person name="Almeida R."/>
            <person name="Alves-Junior L."/>
            <person name="Assuncao E.N."/>
            <person name="Azevedo V.A.C."/>
            <person name="Bogo M.R."/>
            <person name="Brigido M.M."/>
            <person name="Brocchi M."/>
            <person name="Burity H.A."/>
            <person name="Camargo A.A."/>
            <person name="Camargo S.S."/>
            <person name="Carepo M.S."/>
            <person name="Carraro D.M."/>
            <person name="de Mattos Cascardo J.C."/>
            <person name="Castro L.A."/>
            <person name="Cavalcanti G."/>
            <person name="Chemale G."/>
            <person name="Collevatti R.G."/>
            <person name="Cunha C.W."/>
            <person name="Dallagiovanna B."/>
            <person name="Dambros B.P."/>
            <person name="Dellagostin O.A."/>
            <person name="Falcao C."/>
            <person name="Fantinatti-Garboggini F."/>
            <person name="Felipe M.S.S."/>
            <person name="Fiorentin L."/>
            <person name="Franco G.R."/>
            <person name="Freitas N.S.A."/>
            <person name="Frias D."/>
            <person name="Grangeiro T.B."/>
            <person name="Grisard E.C."/>
            <person name="Guimaraes C.T."/>
            <person name="Hungria M."/>
            <person name="Jardim S.N."/>
            <person name="Krieger M.A."/>
            <person name="Laurino J.P."/>
            <person name="Lima L.F.A."/>
            <person name="Lopes M.I."/>
            <person name="Loreto E.L.S."/>
            <person name="Madeira H.M.F."/>
            <person name="Manfio G.P."/>
            <person name="Maranhao A.Q."/>
            <person name="Martinkovics C.T."/>
            <person name="Medeiros S.R.B."/>
            <person name="Moreira M.A.M."/>
            <person name="Neiva M."/>
            <person name="Ramalho-Neto C.E."/>
            <person name="Nicolas M.F."/>
            <person name="Oliveira S.C."/>
            <person name="Paixao R.F.C."/>
            <person name="Pedrosa F.O."/>
            <person name="Pena S.D.J."/>
            <person name="Pereira M."/>
            <person name="Pereira-Ferrari L."/>
            <person name="Piffer I."/>
            <person name="Pinto L.S."/>
            <person name="Potrich D.P."/>
            <person name="Salim A.C.M."/>
            <person name="Santos F.R."/>
            <person name="Schmitt R."/>
            <person name="Schneider M.P.C."/>
            <person name="Schrank A."/>
            <person name="Schrank I.S."/>
            <person name="Schuck A.F."/>
            <person name="Seuanez H.N."/>
            <person name="Silva D.W."/>
            <person name="Silva R."/>
            <person name="Silva S.C."/>
            <person name="Soares C.M.A."/>
            <person name="Souza K.R.L."/>
            <person name="Souza R.C."/>
            <person name="Staats C.C."/>
            <person name="Steffens M.B.R."/>
            <person name="Teixeira S.M.R."/>
            <person name="Urmenyi T.P."/>
            <person name="Vainstein M.H."/>
            <person name="Zuccherato L.W."/>
            <person name="Simpson A.J.G."/>
            <person name="Zaha A."/>
        </authorList>
    </citation>
    <scope>NUCLEOTIDE SEQUENCE [LARGE SCALE GENOMIC DNA]</scope>
    <source>
        <strain>7448</strain>
    </source>
</reference>